<keyword id="KW-0276">Fatty acid metabolism</keyword>
<keyword id="KW-0413">Isomerase</keyword>
<keyword id="KW-0442">Lipid degradation</keyword>
<keyword id="KW-0443">Lipid metabolism</keyword>
<keyword id="KW-0456">Lyase</keyword>
<keyword id="KW-0511">Multifunctional enzyme</keyword>
<keyword id="KW-0520">NAD</keyword>
<keyword id="KW-0560">Oxidoreductase</keyword>
<comment type="function">
    <text evidence="1">Involved in the aerobic and anaerobic degradation of long-chain fatty acids via beta-oxidation cycle. Catalyzes the formation of 3-oxoacyl-CoA from enoyl-CoA via L-3-hydroxyacyl-CoA. It can also use D-3-hydroxyacyl-CoA and cis-3-enoyl-CoA as substrate.</text>
</comment>
<comment type="catalytic activity">
    <reaction evidence="1">
        <text>a (3S)-3-hydroxyacyl-CoA + NAD(+) = a 3-oxoacyl-CoA + NADH + H(+)</text>
        <dbReference type="Rhea" id="RHEA:22432"/>
        <dbReference type="ChEBI" id="CHEBI:15378"/>
        <dbReference type="ChEBI" id="CHEBI:57318"/>
        <dbReference type="ChEBI" id="CHEBI:57540"/>
        <dbReference type="ChEBI" id="CHEBI:57945"/>
        <dbReference type="ChEBI" id="CHEBI:90726"/>
        <dbReference type="EC" id="1.1.1.35"/>
    </reaction>
</comment>
<comment type="catalytic activity">
    <reaction evidence="1">
        <text>a (3S)-3-hydroxyacyl-CoA = a (2E)-enoyl-CoA + H2O</text>
        <dbReference type="Rhea" id="RHEA:16105"/>
        <dbReference type="ChEBI" id="CHEBI:15377"/>
        <dbReference type="ChEBI" id="CHEBI:57318"/>
        <dbReference type="ChEBI" id="CHEBI:58856"/>
        <dbReference type="EC" id="4.2.1.17"/>
    </reaction>
</comment>
<comment type="catalytic activity">
    <reaction evidence="1">
        <text>a 4-saturated-(3S)-3-hydroxyacyl-CoA = a (3E)-enoyl-CoA + H2O</text>
        <dbReference type="Rhea" id="RHEA:20724"/>
        <dbReference type="ChEBI" id="CHEBI:15377"/>
        <dbReference type="ChEBI" id="CHEBI:58521"/>
        <dbReference type="ChEBI" id="CHEBI:137480"/>
        <dbReference type="EC" id="4.2.1.17"/>
    </reaction>
</comment>
<comment type="catalytic activity">
    <reaction evidence="1">
        <text>(3S)-3-hydroxybutanoyl-CoA = (3R)-3-hydroxybutanoyl-CoA</text>
        <dbReference type="Rhea" id="RHEA:21760"/>
        <dbReference type="ChEBI" id="CHEBI:57315"/>
        <dbReference type="ChEBI" id="CHEBI:57316"/>
        <dbReference type="EC" id="5.1.2.3"/>
    </reaction>
</comment>
<comment type="catalytic activity">
    <reaction evidence="1">
        <text>a (3Z)-enoyl-CoA = a 4-saturated (2E)-enoyl-CoA</text>
        <dbReference type="Rhea" id="RHEA:45900"/>
        <dbReference type="ChEBI" id="CHEBI:85097"/>
        <dbReference type="ChEBI" id="CHEBI:85489"/>
        <dbReference type="EC" id="5.3.3.8"/>
    </reaction>
</comment>
<comment type="catalytic activity">
    <reaction evidence="1">
        <text>a (3E)-enoyl-CoA = a 4-saturated (2E)-enoyl-CoA</text>
        <dbReference type="Rhea" id="RHEA:45228"/>
        <dbReference type="ChEBI" id="CHEBI:58521"/>
        <dbReference type="ChEBI" id="CHEBI:85097"/>
        <dbReference type="EC" id="5.3.3.8"/>
    </reaction>
</comment>
<comment type="pathway">
    <text evidence="1">Lipid metabolism; fatty acid beta-oxidation.</text>
</comment>
<comment type="subunit">
    <text evidence="1">Heterotetramer of two alpha chains (FadB) and two beta chains (FadA).</text>
</comment>
<comment type="similarity">
    <text evidence="1">In the N-terminal section; belongs to the enoyl-CoA hydratase/isomerase family.</text>
</comment>
<comment type="similarity">
    <text evidence="1">In the C-terminal section; belongs to the 3-hydroxyacyl-CoA dehydrogenase family.</text>
</comment>
<evidence type="ECO:0000255" key="1">
    <source>
        <dbReference type="HAMAP-Rule" id="MF_01621"/>
    </source>
</evidence>
<evidence type="ECO:0000256" key="2">
    <source>
        <dbReference type="SAM" id="MobiDB-lite"/>
    </source>
</evidence>
<sequence length="729" mass="79551">MLYKGDTLYLDWLEDGIAELVFDAPGSVNKLDTATVASLGQALEVLEKQHDLKGLLLRSNKAAFIVGADITEFLSLFLVPEEQLSQWLHFANSVFNRLEDLPVPTLAAVNGYALGGGCECVLATDYRLATPDLRIGLPETKLGIMPGFGGSVRLPRMLGADSALEIIAAGKDVGAEHALKIGLVDGVVKQEKLIEGAIAVLRQAITGDLDWRAKRQPKLEPLKLSKIEAAMSFTIAKGMVAQTAGKHYPAPMTAVKTIEAAARFGREEALNLENKSFVPLAHTNEARALVGIFLNDQYVKGKAKKLTKDIETPKQAAVLGAGIMGGGIAYQSAWKGVPVIMKDINDKSLNLGMTEAAKLLNKQLERGKIGGLKLAGVISTIHPTLDYAGFDRVDVVVEAVVENPKVKKAVLAETEQKVRPETVLASNTSTIPIGELASALERPENFCGMHFFNPVHRMPLVEIIRGEKSSDETIAKVVAWASKMGKTPIVVNDCPGFFVNRVLFPYFAGFSQLLRDGADFRKVDKVMEKQFGWPMGPAYLLDVVGIDTAHHAQAVMAAGFPQRMQKEYRDAIDALFDASRFGQKNGLGFWRYKEDSKGKPKKEEDAAVDDLLASVSQPKRDFSDDEIIARMMIPMINEVVRCLEEGIIASPAEADMALVYGLGFPPFHGGAFRWLDTQGSAKYLDMAQQYQHLGPLYEVPEGLRDKARHNEPYYPPVEPARPVGSLKTA</sequence>
<organism>
    <name type="scientific">Salmonella agona (strain SL483)</name>
    <dbReference type="NCBI Taxonomy" id="454166"/>
    <lineage>
        <taxon>Bacteria</taxon>
        <taxon>Pseudomonadati</taxon>
        <taxon>Pseudomonadota</taxon>
        <taxon>Gammaproteobacteria</taxon>
        <taxon>Enterobacterales</taxon>
        <taxon>Enterobacteriaceae</taxon>
        <taxon>Salmonella</taxon>
    </lineage>
</organism>
<dbReference type="EC" id="4.2.1.17" evidence="1"/>
<dbReference type="EC" id="5.1.2.3" evidence="1"/>
<dbReference type="EC" id="5.3.3.8" evidence="1"/>
<dbReference type="EC" id="1.1.1.35" evidence="1"/>
<dbReference type="EMBL" id="CP001138">
    <property type="protein sequence ID" value="ACH48982.1"/>
    <property type="molecule type" value="Genomic_DNA"/>
</dbReference>
<dbReference type="RefSeq" id="WP_000966006.1">
    <property type="nucleotide sequence ID" value="NC_011149.1"/>
</dbReference>
<dbReference type="SMR" id="B5EZW0"/>
<dbReference type="KEGG" id="sea:SeAg_B4213"/>
<dbReference type="HOGENOM" id="CLU_009834_16_3_6"/>
<dbReference type="UniPathway" id="UPA00659"/>
<dbReference type="Proteomes" id="UP000008819">
    <property type="component" value="Chromosome"/>
</dbReference>
<dbReference type="GO" id="GO:0036125">
    <property type="term" value="C:fatty acid beta-oxidation multienzyme complex"/>
    <property type="evidence" value="ECO:0007669"/>
    <property type="project" value="InterPro"/>
</dbReference>
<dbReference type="GO" id="GO:0008692">
    <property type="term" value="F:3-hydroxybutyryl-CoA epimerase activity"/>
    <property type="evidence" value="ECO:0007669"/>
    <property type="project" value="UniProtKB-UniRule"/>
</dbReference>
<dbReference type="GO" id="GO:0004165">
    <property type="term" value="F:delta(3)-delta(2)-enoyl-CoA isomerase activity"/>
    <property type="evidence" value="ECO:0007669"/>
    <property type="project" value="UniProtKB-UniRule"/>
</dbReference>
<dbReference type="GO" id="GO:0004300">
    <property type="term" value="F:enoyl-CoA hydratase activity"/>
    <property type="evidence" value="ECO:0007669"/>
    <property type="project" value="UniProtKB-UniRule"/>
</dbReference>
<dbReference type="GO" id="GO:0016509">
    <property type="term" value="F:long-chain-3-hydroxyacyl-CoA dehydrogenase activity"/>
    <property type="evidence" value="ECO:0007669"/>
    <property type="project" value="TreeGrafter"/>
</dbReference>
<dbReference type="GO" id="GO:0070403">
    <property type="term" value="F:NAD+ binding"/>
    <property type="evidence" value="ECO:0007669"/>
    <property type="project" value="InterPro"/>
</dbReference>
<dbReference type="GO" id="GO:0006635">
    <property type="term" value="P:fatty acid beta-oxidation"/>
    <property type="evidence" value="ECO:0007669"/>
    <property type="project" value="UniProtKB-UniRule"/>
</dbReference>
<dbReference type="CDD" id="cd06558">
    <property type="entry name" value="crotonase-like"/>
    <property type="match status" value="1"/>
</dbReference>
<dbReference type="FunFam" id="1.10.1040.50:FF:000001">
    <property type="entry name" value="Fatty acid oxidation complex subunit alpha"/>
    <property type="match status" value="1"/>
</dbReference>
<dbReference type="FunFam" id="3.90.226.10:FF:000018">
    <property type="entry name" value="Fatty acid oxidation complex subunit alpha"/>
    <property type="match status" value="1"/>
</dbReference>
<dbReference type="FunFam" id="3.40.50.720:FF:000009">
    <property type="entry name" value="Fatty oxidation complex, alpha subunit"/>
    <property type="match status" value="1"/>
</dbReference>
<dbReference type="Gene3D" id="1.10.1040.50">
    <property type="match status" value="1"/>
</dbReference>
<dbReference type="Gene3D" id="3.90.226.10">
    <property type="entry name" value="2-enoyl-CoA Hydratase, Chain A, domain 1"/>
    <property type="match status" value="1"/>
</dbReference>
<dbReference type="Gene3D" id="3.40.50.720">
    <property type="entry name" value="NAD(P)-binding Rossmann-like Domain"/>
    <property type="match status" value="1"/>
</dbReference>
<dbReference type="HAMAP" id="MF_01621">
    <property type="entry name" value="FadB"/>
    <property type="match status" value="1"/>
</dbReference>
<dbReference type="InterPro" id="IPR006180">
    <property type="entry name" value="3-OHacyl-CoA_DH_CS"/>
</dbReference>
<dbReference type="InterPro" id="IPR006176">
    <property type="entry name" value="3-OHacyl-CoA_DH_NAD-bd"/>
</dbReference>
<dbReference type="InterPro" id="IPR006108">
    <property type="entry name" value="3HC_DH_C"/>
</dbReference>
<dbReference type="InterPro" id="IPR008927">
    <property type="entry name" value="6-PGluconate_DH-like_C_sf"/>
</dbReference>
<dbReference type="InterPro" id="IPR029045">
    <property type="entry name" value="ClpP/crotonase-like_dom_sf"/>
</dbReference>
<dbReference type="InterPro" id="IPR018376">
    <property type="entry name" value="Enoyl-CoA_hyd/isom_CS"/>
</dbReference>
<dbReference type="InterPro" id="IPR001753">
    <property type="entry name" value="Enoyl-CoA_hydra/iso"/>
</dbReference>
<dbReference type="InterPro" id="IPR050136">
    <property type="entry name" value="FA_oxidation_alpha_subunit"/>
</dbReference>
<dbReference type="InterPro" id="IPR012799">
    <property type="entry name" value="FadB"/>
</dbReference>
<dbReference type="InterPro" id="IPR036291">
    <property type="entry name" value="NAD(P)-bd_dom_sf"/>
</dbReference>
<dbReference type="NCBIfam" id="TIGR02437">
    <property type="entry name" value="FadB"/>
    <property type="match status" value="1"/>
</dbReference>
<dbReference type="NCBIfam" id="NF008727">
    <property type="entry name" value="PRK11730.1"/>
    <property type="match status" value="1"/>
</dbReference>
<dbReference type="PANTHER" id="PTHR43612">
    <property type="entry name" value="TRIFUNCTIONAL ENZYME SUBUNIT ALPHA"/>
    <property type="match status" value="1"/>
</dbReference>
<dbReference type="PANTHER" id="PTHR43612:SF3">
    <property type="entry name" value="TRIFUNCTIONAL ENZYME SUBUNIT ALPHA, MITOCHONDRIAL"/>
    <property type="match status" value="1"/>
</dbReference>
<dbReference type="Pfam" id="PF00725">
    <property type="entry name" value="3HCDH"/>
    <property type="match status" value="2"/>
</dbReference>
<dbReference type="Pfam" id="PF02737">
    <property type="entry name" value="3HCDH_N"/>
    <property type="match status" value="1"/>
</dbReference>
<dbReference type="Pfam" id="PF00378">
    <property type="entry name" value="ECH_1"/>
    <property type="match status" value="1"/>
</dbReference>
<dbReference type="SUPFAM" id="SSF48179">
    <property type="entry name" value="6-phosphogluconate dehydrogenase C-terminal domain-like"/>
    <property type="match status" value="2"/>
</dbReference>
<dbReference type="SUPFAM" id="SSF52096">
    <property type="entry name" value="ClpP/crotonase"/>
    <property type="match status" value="1"/>
</dbReference>
<dbReference type="SUPFAM" id="SSF51735">
    <property type="entry name" value="NAD(P)-binding Rossmann-fold domains"/>
    <property type="match status" value="1"/>
</dbReference>
<dbReference type="PROSITE" id="PS00067">
    <property type="entry name" value="3HCDH"/>
    <property type="match status" value="1"/>
</dbReference>
<dbReference type="PROSITE" id="PS00166">
    <property type="entry name" value="ENOYL_COA_HYDRATASE"/>
    <property type="match status" value="1"/>
</dbReference>
<accession>B5EZW0</accession>
<proteinExistence type="inferred from homology"/>
<protein>
    <recommendedName>
        <fullName evidence="1">Fatty acid oxidation complex subunit alpha</fullName>
    </recommendedName>
    <domain>
        <recommendedName>
            <fullName evidence="1">Enoyl-CoA hydratase/Delta(3)-cis-Delta(2)-trans-enoyl-CoA isomerase/3-hydroxybutyryl-CoA epimerase</fullName>
            <ecNumber evidence="1">4.2.1.17</ecNumber>
            <ecNumber evidence="1">5.1.2.3</ecNumber>
            <ecNumber evidence="1">5.3.3.8</ecNumber>
        </recommendedName>
    </domain>
    <domain>
        <recommendedName>
            <fullName evidence="1">3-hydroxyacyl-CoA dehydrogenase</fullName>
            <ecNumber evidence="1">1.1.1.35</ecNumber>
        </recommendedName>
    </domain>
</protein>
<reference key="1">
    <citation type="journal article" date="2011" name="J. Bacteriol.">
        <title>Comparative genomics of 28 Salmonella enterica isolates: evidence for CRISPR-mediated adaptive sublineage evolution.</title>
        <authorList>
            <person name="Fricke W.F."/>
            <person name="Mammel M.K."/>
            <person name="McDermott P.F."/>
            <person name="Tartera C."/>
            <person name="White D.G."/>
            <person name="Leclerc J.E."/>
            <person name="Ravel J."/>
            <person name="Cebula T.A."/>
        </authorList>
    </citation>
    <scope>NUCLEOTIDE SEQUENCE [LARGE SCALE GENOMIC DNA]</scope>
    <source>
        <strain>SL483</strain>
    </source>
</reference>
<name>FADB_SALA4</name>
<feature type="chain" id="PRO_1000186047" description="Fatty acid oxidation complex subunit alpha">
    <location>
        <begin position="1"/>
        <end position="729"/>
    </location>
</feature>
<feature type="region of interest" description="Enoyl-CoA hydratase/isomerase" evidence="1">
    <location>
        <begin position="1"/>
        <end position="189"/>
    </location>
</feature>
<feature type="region of interest" description="3-hydroxyacyl-CoA dehydrogenase" evidence="1">
    <location>
        <begin position="311"/>
        <end position="729"/>
    </location>
</feature>
<feature type="region of interest" description="Disordered" evidence="2">
    <location>
        <begin position="708"/>
        <end position="729"/>
    </location>
</feature>
<feature type="active site" description="For 3-hydroxyacyl-CoA dehydrogenase activity" evidence="1">
    <location>
        <position position="450"/>
    </location>
</feature>
<feature type="binding site" evidence="1">
    <location>
        <position position="296"/>
    </location>
    <ligand>
        <name>substrate</name>
    </ligand>
</feature>
<feature type="binding site" evidence="1">
    <location>
        <position position="324"/>
    </location>
    <ligand>
        <name>NAD(+)</name>
        <dbReference type="ChEBI" id="CHEBI:57540"/>
    </ligand>
</feature>
<feature type="binding site" evidence="1">
    <location>
        <position position="343"/>
    </location>
    <ligand>
        <name>NAD(+)</name>
        <dbReference type="ChEBI" id="CHEBI:57540"/>
    </ligand>
</feature>
<feature type="binding site" evidence="1">
    <location>
        <begin position="400"/>
        <end position="402"/>
    </location>
    <ligand>
        <name>NAD(+)</name>
        <dbReference type="ChEBI" id="CHEBI:57540"/>
    </ligand>
</feature>
<feature type="binding site" evidence="1">
    <location>
        <position position="407"/>
    </location>
    <ligand>
        <name>NAD(+)</name>
        <dbReference type="ChEBI" id="CHEBI:57540"/>
    </ligand>
</feature>
<feature type="binding site" evidence="1">
    <location>
        <position position="429"/>
    </location>
    <ligand>
        <name>NAD(+)</name>
        <dbReference type="ChEBI" id="CHEBI:57540"/>
    </ligand>
</feature>
<feature type="binding site" evidence="1">
    <location>
        <position position="453"/>
    </location>
    <ligand>
        <name>NAD(+)</name>
        <dbReference type="ChEBI" id="CHEBI:57540"/>
    </ligand>
</feature>
<feature type="binding site" evidence="1">
    <location>
        <position position="500"/>
    </location>
    <ligand>
        <name>substrate</name>
    </ligand>
</feature>
<feature type="binding site" evidence="1">
    <location>
        <position position="660"/>
    </location>
    <ligand>
        <name>substrate</name>
    </ligand>
</feature>
<feature type="site" description="Important for catalytic activity" evidence="1">
    <location>
        <position position="119"/>
    </location>
</feature>
<feature type="site" description="Important for catalytic activity" evidence="1">
    <location>
        <position position="139"/>
    </location>
</feature>
<gene>
    <name evidence="1" type="primary">fadB</name>
    <name type="ordered locus">SeAg_B4213</name>
</gene>